<comment type="function">
    <text evidence="1">Catalyzes two activities which are involved in the cyclic version of arginine biosynthesis: the synthesis of N-acetylglutamate from glutamate and acetyl-CoA as the acetyl donor, and of ornithine by transacetylation between N(2)-acetylornithine and glutamate.</text>
</comment>
<comment type="catalytic activity">
    <reaction evidence="1">
        <text>N(2)-acetyl-L-ornithine + L-glutamate = N-acetyl-L-glutamate + L-ornithine</text>
        <dbReference type="Rhea" id="RHEA:15349"/>
        <dbReference type="ChEBI" id="CHEBI:29985"/>
        <dbReference type="ChEBI" id="CHEBI:44337"/>
        <dbReference type="ChEBI" id="CHEBI:46911"/>
        <dbReference type="ChEBI" id="CHEBI:57805"/>
        <dbReference type="EC" id="2.3.1.35"/>
    </reaction>
</comment>
<comment type="catalytic activity">
    <reaction evidence="1">
        <text>L-glutamate + acetyl-CoA = N-acetyl-L-glutamate + CoA + H(+)</text>
        <dbReference type="Rhea" id="RHEA:24292"/>
        <dbReference type="ChEBI" id="CHEBI:15378"/>
        <dbReference type="ChEBI" id="CHEBI:29985"/>
        <dbReference type="ChEBI" id="CHEBI:44337"/>
        <dbReference type="ChEBI" id="CHEBI:57287"/>
        <dbReference type="ChEBI" id="CHEBI:57288"/>
        <dbReference type="EC" id="2.3.1.1"/>
    </reaction>
</comment>
<comment type="pathway">
    <text evidence="1">Amino-acid biosynthesis; L-arginine biosynthesis; L-ornithine and N-acetyl-L-glutamate from L-glutamate and N(2)-acetyl-L-ornithine (cyclic): step 1/1.</text>
</comment>
<comment type="pathway">
    <text evidence="1">Amino-acid biosynthesis; L-arginine biosynthesis; N(2)-acetyl-L-ornithine from L-glutamate: step 1/4.</text>
</comment>
<comment type="subunit">
    <text evidence="1">Heterotetramer of two alpha and two beta chains.</text>
</comment>
<comment type="subcellular location">
    <subcellularLocation>
        <location evidence="1">Cytoplasm</location>
    </subcellularLocation>
</comment>
<comment type="similarity">
    <text evidence="1">Belongs to the ArgJ family.</text>
</comment>
<protein>
    <recommendedName>
        <fullName evidence="1">Arginine biosynthesis bifunctional protein ArgJ</fullName>
    </recommendedName>
    <domain>
        <recommendedName>
            <fullName evidence="1">Glutamate N-acetyltransferase</fullName>
            <ecNumber evidence="1">2.3.1.35</ecNumber>
        </recommendedName>
        <alternativeName>
            <fullName evidence="1">Ornithine acetyltransferase</fullName>
            <shortName evidence="1">OATase</shortName>
        </alternativeName>
        <alternativeName>
            <fullName evidence="1">Ornithine transacetylase</fullName>
        </alternativeName>
    </domain>
    <domain>
        <recommendedName>
            <fullName evidence="1">Amino-acid acetyltransferase</fullName>
            <ecNumber evidence="1">2.3.1.1</ecNumber>
        </recommendedName>
        <alternativeName>
            <fullName evidence="1">N-acetylglutamate synthase</fullName>
            <shortName evidence="1">AGSase</shortName>
        </alternativeName>
    </domain>
    <component>
        <recommendedName>
            <fullName evidence="1">Arginine biosynthesis bifunctional protein ArgJ alpha chain</fullName>
        </recommendedName>
    </component>
    <component>
        <recommendedName>
            <fullName evidence="1">Arginine biosynthesis bifunctional protein ArgJ beta chain</fullName>
        </recommendedName>
    </component>
</protein>
<reference key="1">
    <citation type="journal article" date="2002" name="Proc. Natl. Acad. Sci. U.S.A.">
        <title>The genome sequence of the facultative intracellular pathogen Brucella melitensis.</title>
        <authorList>
            <person name="DelVecchio V.G."/>
            <person name="Kapatral V."/>
            <person name="Redkar R.J."/>
            <person name="Patra G."/>
            <person name="Mujer C."/>
            <person name="Los T."/>
            <person name="Ivanova N."/>
            <person name="Anderson I."/>
            <person name="Bhattacharyya A."/>
            <person name="Lykidis A."/>
            <person name="Reznik G."/>
            <person name="Jablonski L."/>
            <person name="Larsen N."/>
            <person name="D'Souza M."/>
            <person name="Bernal A."/>
            <person name="Mazur M."/>
            <person name="Goltsman E."/>
            <person name="Selkov E."/>
            <person name="Elzer P.H."/>
            <person name="Hagius S."/>
            <person name="O'Callaghan D."/>
            <person name="Letesson J.-J."/>
            <person name="Haselkorn R."/>
            <person name="Kyrpides N.C."/>
            <person name="Overbeek R."/>
        </authorList>
    </citation>
    <scope>NUCLEOTIDE SEQUENCE [LARGE SCALE GENOMIC DNA]</scope>
    <source>
        <strain>ATCC 23456 / CCUG 17765 / NCTC 10094 / 16M</strain>
    </source>
</reference>
<accession>Q8YJF9</accession>
<keyword id="KW-0012">Acyltransferase</keyword>
<keyword id="KW-0028">Amino-acid biosynthesis</keyword>
<keyword id="KW-0055">Arginine biosynthesis</keyword>
<keyword id="KW-0068">Autocatalytic cleavage</keyword>
<keyword id="KW-0963">Cytoplasm</keyword>
<keyword id="KW-0511">Multifunctional enzyme</keyword>
<keyword id="KW-0808">Transferase</keyword>
<dbReference type="EC" id="2.3.1.35" evidence="1"/>
<dbReference type="EC" id="2.3.1.1" evidence="1"/>
<dbReference type="EMBL" id="AE008917">
    <property type="protein sequence ID" value="AAL51306.1"/>
    <property type="molecule type" value="Genomic_DNA"/>
</dbReference>
<dbReference type="PIR" id="AG3267">
    <property type="entry name" value="AG3267"/>
</dbReference>
<dbReference type="RefSeq" id="WP_004684467.1">
    <property type="nucleotide sequence ID" value="NZ_GG703778.1"/>
</dbReference>
<dbReference type="SMR" id="Q8YJF9"/>
<dbReference type="MEROPS" id="T05.001"/>
<dbReference type="GeneID" id="29594771"/>
<dbReference type="KEGG" id="bme:BMEI0124"/>
<dbReference type="KEGG" id="bmel:DK63_1310"/>
<dbReference type="PATRIC" id="fig|224914.52.peg.1382"/>
<dbReference type="eggNOG" id="COG1364">
    <property type="taxonomic scope" value="Bacteria"/>
</dbReference>
<dbReference type="UniPathway" id="UPA00068">
    <property type="reaction ID" value="UER00106"/>
</dbReference>
<dbReference type="UniPathway" id="UPA00068">
    <property type="reaction ID" value="UER00111"/>
</dbReference>
<dbReference type="Proteomes" id="UP000000419">
    <property type="component" value="Chromosome I"/>
</dbReference>
<dbReference type="GO" id="GO:0005737">
    <property type="term" value="C:cytoplasm"/>
    <property type="evidence" value="ECO:0007669"/>
    <property type="project" value="UniProtKB-SubCell"/>
</dbReference>
<dbReference type="GO" id="GO:0004358">
    <property type="term" value="F:glutamate N-acetyltransferase activity"/>
    <property type="evidence" value="ECO:0007669"/>
    <property type="project" value="UniProtKB-UniRule"/>
</dbReference>
<dbReference type="GO" id="GO:0004042">
    <property type="term" value="F:L-glutamate N-acetyltransferase activity"/>
    <property type="evidence" value="ECO:0007669"/>
    <property type="project" value="UniProtKB-UniRule"/>
</dbReference>
<dbReference type="GO" id="GO:0006526">
    <property type="term" value="P:L-arginine biosynthetic process"/>
    <property type="evidence" value="ECO:0007669"/>
    <property type="project" value="UniProtKB-UniRule"/>
</dbReference>
<dbReference type="GO" id="GO:0006592">
    <property type="term" value="P:ornithine biosynthetic process"/>
    <property type="evidence" value="ECO:0007669"/>
    <property type="project" value="TreeGrafter"/>
</dbReference>
<dbReference type="CDD" id="cd02152">
    <property type="entry name" value="OAT"/>
    <property type="match status" value="1"/>
</dbReference>
<dbReference type="FunFam" id="3.10.20.340:FF:000001">
    <property type="entry name" value="Arginine biosynthesis bifunctional protein ArgJ, chloroplastic"/>
    <property type="match status" value="1"/>
</dbReference>
<dbReference type="FunFam" id="3.60.70.12:FF:000001">
    <property type="entry name" value="Arginine biosynthesis bifunctional protein ArgJ, chloroplastic"/>
    <property type="match status" value="1"/>
</dbReference>
<dbReference type="Gene3D" id="3.10.20.340">
    <property type="entry name" value="ArgJ beta chain, C-terminal domain"/>
    <property type="match status" value="1"/>
</dbReference>
<dbReference type="Gene3D" id="3.60.70.12">
    <property type="entry name" value="L-amino peptidase D-ALA esterase/amidase"/>
    <property type="match status" value="1"/>
</dbReference>
<dbReference type="HAMAP" id="MF_01106">
    <property type="entry name" value="ArgJ"/>
    <property type="match status" value="1"/>
</dbReference>
<dbReference type="InterPro" id="IPR002813">
    <property type="entry name" value="Arg_biosynth_ArgJ"/>
</dbReference>
<dbReference type="InterPro" id="IPR016117">
    <property type="entry name" value="ArgJ-like_dom_sf"/>
</dbReference>
<dbReference type="InterPro" id="IPR042195">
    <property type="entry name" value="ArgJ_beta_C"/>
</dbReference>
<dbReference type="NCBIfam" id="TIGR00120">
    <property type="entry name" value="ArgJ"/>
    <property type="match status" value="1"/>
</dbReference>
<dbReference type="NCBIfam" id="NF003802">
    <property type="entry name" value="PRK05388.1"/>
    <property type="match status" value="1"/>
</dbReference>
<dbReference type="PANTHER" id="PTHR23100">
    <property type="entry name" value="ARGININE BIOSYNTHESIS BIFUNCTIONAL PROTEIN ARGJ"/>
    <property type="match status" value="1"/>
</dbReference>
<dbReference type="PANTHER" id="PTHR23100:SF0">
    <property type="entry name" value="ARGININE BIOSYNTHESIS BIFUNCTIONAL PROTEIN ARGJ, MITOCHONDRIAL"/>
    <property type="match status" value="1"/>
</dbReference>
<dbReference type="Pfam" id="PF01960">
    <property type="entry name" value="ArgJ"/>
    <property type="match status" value="1"/>
</dbReference>
<dbReference type="SUPFAM" id="SSF56266">
    <property type="entry name" value="DmpA/ArgJ-like"/>
    <property type="match status" value="1"/>
</dbReference>
<name>ARGJ_BRUME</name>
<sequence>MSASVSPLAPKYYPAMPVIHGVRIATAAAGIKYKGRTDLMLMVFDRPAEAAGVFTRSLCPSAPVDFCRRNLVHGKARAVVVNSGNANAFTGLKGREATQATAEAAAKAIGCATTDIFLASTGVIGEPLDAGKFSHLLGDMAESATEDFWTEAAKAIMTTDTYPKVATETVLLGQVPVTINGIAKGAGMIAPDMATMLSFVVTDAPIKADALQSLLSKGVGSTFNSVTVDSDTSTSDTLMLFATGTAAERGAPEITDAADKRLADFKKALGRVLKSLALQVVRDGEGARKMVEVEVTGAKSAASAKKIALSIANSPLVKTAVAGEDANWGRVVMAVGKAGEPADRDRLAIWFGDIRVAHQGERDPAYSEDATSAYMEGEDIRIRVDLSIGRGKATVWTCDLTKEYVAINGDYRS</sequence>
<proteinExistence type="inferred from homology"/>
<evidence type="ECO:0000255" key="1">
    <source>
        <dbReference type="HAMAP-Rule" id="MF_01106"/>
    </source>
</evidence>
<organism>
    <name type="scientific">Brucella melitensis biotype 1 (strain ATCC 23456 / CCUG 17765 / NCTC 10094 / 16M)</name>
    <dbReference type="NCBI Taxonomy" id="224914"/>
    <lineage>
        <taxon>Bacteria</taxon>
        <taxon>Pseudomonadati</taxon>
        <taxon>Pseudomonadota</taxon>
        <taxon>Alphaproteobacteria</taxon>
        <taxon>Hyphomicrobiales</taxon>
        <taxon>Brucellaceae</taxon>
        <taxon>Brucella/Ochrobactrum group</taxon>
        <taxon>Brucella</taxon>
    </lineage>
</organism>
<gene>
    <name evidence="1" type="primary">argJ</name>
    <name type="ordered locus">BMEI0124</name>
</gene>
<feature type="chain" id="PRO_0000002137" description="Arginine biosynthesis bifunctional protein ArgJ alpha chain" evidence="1">
    <location>
        <begin position="1"/>
        <end position="194"/>
    </location>
</feature>
<feature type="chain" id="PRO_0000002138" description="Arginine biosynthesis bifunctional protein ArgJ beta chain" evidence="1">
    <location>
        <begin position="195"/>
        <end position="413"/>
    </location>
</feature>
<feature type="active site" description="Nucleophile" evidence="1">
    <location>
        <position position="195"/>
    </location>
</feature>
<feature type="binding site" evidence="1">
    <location>
        <position position="158"/>
    </location>
    <ligand>
        <name>substrate</name>
    </ligand>
</feature>
<feature type="binding site" evidence="1">
    <location>
        <position position="184"/>
    </location>
    <ligand>
        <name>substrate</name>
    </ligand>
</feature>
<feature type="binding site" evidence="1">
    <location>
        <position position="195"/>
    </location>
    <ligand>
        <name>substrate</name>
    </ligand>
</feature>
<feature type="binding site" evidence="1">
    <location>
        <position position="285"/>
    </location>
    <ligand>
        <name>substrate</name>
    </ligand>
</feature>
<feature type="binding site" evidence="1">
    <location>
        <position position="408"/>
    </location>
    <ligand>
        <name>substrate</name>
    </ligand>
</feature>
<feature type="binding site" evidence="1">
    <location>
        <position position="413"/>
    </location>
    <ligand>
        <name>substrate</name>
    </ligand>
</feature>
<feature type="site" description="Involved in the stabilization of negative charge on the oxyanion by the formation of the oxyanion hole" evidence="1">
    <location>
        <position position="121"/>
    </location>
</feature>
<feature type="site" description="Involved in the stabilization of negative charge on the oxyanion by the formation of the oxyanion hole" evidence="1">
    <location>
        <position position="122"/>
    </location>
</feature>
<feature type="site" description="Cleavage; by autolysis" evidence="1">
    <location>
        <begin position="194"/>
        <end position="195"/>
    </location>
</feature>